<organism>
    <name type="scientific">Mycolicibacterium gilvum (strain PYR-GCK)</name>
    <name type="common">Mycobacterium gilvum (strain PYR-GCK)</name>
    <dbReference type="NCBI Taxonomy" id="350054"/>
    <lineage>
        <taxon>Bacteria</taxon>
        <taxon>Bacillati</taxon>
        <taxon>Actinomycetota</taxon>
        <taxon>Actinomycetes</taxon>
        <taxon>Mycobacteriales</taxon>
        <taxon>Mycobacteriaceae</taxon>
        <taxon>Mycolicibacterium</taxon>
    </lineage>
</organism>
<evidence type="ECO:0000255" key="1">
    <source>
        <dbReference type="HAMAP-Rule" id="MF_01007"/>
    </source>
</evidence>
<accession>A4TBF6</accession>
<keyword id="KW-0963">Cytoplasm</keyword>
<keyword id="KW-0489">Methyltransferase</keyword>
<keyword id="KW-0698">rRNA processing</keyword>
<keyword id="KW-0949">S-adenosyl-L-methionine</keyword>
<keyword id="KW-0808">Transferase</keyword>
<sequence>MKPSATSSDLATGPQARAVWPLSEPALTYFPDVRFATSDRDLTAGAAPTPQSAAMVDDQPHVPVLLDRCVELLAPALTREGATLVDATLGAGGHSERFLTDFPGLRLIGLDRDPDALRIAGERLAPFADRITLVRTRYDGIADAVRDAAGGSVDAILFDLGVSSMQLDRVERGFSYSTDAPLDMRMDSGADLTAAQVLNSYDERALARVLREYGEEKFAGRIAAFIVRRRAVTPFTTTGELVELLYDAIPAPARRTGGHPAKRTFQALRIEVNAELESLRSAIPAALQALRPHGRLAVMAYQSLEDRIVKTAFAAATASRTPPGLPVELPGHGPEFVALTRGAERADAEEIERNPRSAPVRLRAVEKVGGE</sequence>
<protein>
    <recommendedName>
        <fullName evidence="1">Ribosomal RNA small subunit methyltransferase H</fullName>
        <ecNumber evidence="1">2.1.1.199</ecNumber>
    </recommendedName>
    <alternativeName>
        <fullName evidence="1">16S rRNA m(4)C1402 methyltransferase</fullName>
    </alternativeName>
    <alternativeName>
        <fullName evidence="1">rRNA (cytosine-N(4)-)-methyltransferase RsmH</fullName>
    </alternativeName>
</protein>
<gene>
    <name evidence="1" type="primary">rsmH</name>
    <name type="synonym">mraW</name>
    <name type="ordered locus">Mflv_2980</name>
</gene>
<feature type="chain" id="PRO_0000386988" description="Ribosomal RNA small subunit methyltransferase H">
    <location>
        <begin position="1"/>
        <end position="371"/>
    </location>
</feature>
<feature type="binding site" evidence="1">
    <location>
        <begin position="92"/>
        <end position="94"/>
    </location>
    <ligand>
        <name>S-adenosyl-L-methionine</name>
        <dbReference type="ChEBI" id="CHEBI:59789"/>
    </ligand>
</feature>
<feature type="binding site" evidence="1">
    <location>
        <position position="111"/>
    </location>
    <ligand>
        <name>S-adenosyl-L-methionine</name>
        <dbReference type="ChEBI" id="CHEBI:59789"/>
    </ligand>
</feature>
<feature type="binding site" evidence="1">
    <location>
        <position position="138"/>
    </location>
    <ligand>
        <name>S-adenosyl-L-methionine</name>
        <dbReference type="ChEBI" id="CHEBI:59789"/>
    </ligand>
</feature>
<feature type="binding site" evidence="1">
    <location>
        <position position="159"/>
    </location>
    <ligand>
        <name>S-adenosyl-L-methionine</name>
        <dbReference type="ChEBI" id="CHEBI:59789"/>
    </ligand>
</feature>
<feature type="binding site" evidence="1">
    <location>
        <position position="166"/>
    </location>
    <ligand>
        <name>S-adenosyl-L-methionine</name>
        <dbReference type="ChEBI" id="CHEBI:59789"/>
    </ligand>
</feature>
<comment type="function">
    <text evidence="1">Specifically methylates the N4 position of cytidine in position 1402 (C1402) of 16S rRNA.</text>
</comment>
<comment type="catalytic activity">
    <reaction evidence="1">
        <text>cytidine(1402) in 16S rRNA + S-adenosyl-L-methionine = N(4)-methylcytidine(1402) in 16S rRNA + S-adenosyl-L-homocysteine + H(+)</text>
        <dbReference type="Rhea" id="RHEA:42928"/>
        <dbReference type="Rhea" id="RHEA-COMP:10286"/>
        <dbReference type="Rhea" id="RHEA-COMP:10287"/>
        <dbReference type="ChEBI" id="CHEBI:15378"/>
        <dbReference type="ChEBI" id="CHEBI:57856"/>
        <dbReference type="ChEBI" id="CHEBI:59789"/>
        <dbReference type="ChEBI" id="CHEBI:74506"/>
        <dbReference type="ChEBI" id="CHEBI:82748"/>
        <dbReference type="EC" id="2.1.1.199"/>
    </reaction>
</comment>
<comment type="subcellular location">
    <subcellularLocation>
        <location evidence="1">Cytoplasm</location>
    </subcellularLocation>
</comment>
<comment type="similarity">
    <text evidence="1">Belongs to the methyltransferase superfamily. RsmH family.</text>
</comment>
<proteinExistence type="inferred from homology"/>
<name>RSMH_MYCGI</name>
<dbReference type="EC" id="2.1.1.199" evidence="1"/>
<dbReference type="EMBL" id="CP000656">
    <property type="protein sequence ID" value="ABP45457.1"/>
    <property type="molecule type" value="Genomic_DNA"/>
</dbReference>
<dbReference type="SMR" id="A4TBF6"/>
<dbReference type="STRING" id="350054.Mflv_2980"/>
<dbReference type="KEGG" id="mgi:Mflv_2980"/>
<dbReference type="eggNOG" id="COG0275">
    <property type="taxonomic scope" value="Bacteria"/>
</dbReference>
<dbReference type="HOGENOM" id="CLU_038422_0_0_11"/>
<dbReference type="GO" id="GO:0005737">
    <property type="term" value="C:cytoplasm"/>
    <property type="evidence" value="ECO:0007669"/>
    <property type="project" value="UniProtKB-SubCell"/>
</dbReference>
<dbReference type="GO" id="GO:0071424">
    <property type="term" value="F:rRNA (cytosine-N4-)-methyltransferase activity"/>
    <property type="evidence" value="ECO:0007669"/>
    <property type="project" value="UniProtKB-UniRule"/>
</dbReference>
<dbReference type="GO" id="GO:0070475">
    <property type="term" value="P:rRNA base methylation"/>
    <property type="evidence" value="ECO:0007669"/>
    <property type="project" value="UniProtKB-UniRule"/>
</dbReference>
<dbReference type="FunFam" id="1.10.150.170:FF:000001">
    <property type="entry name" value="Ribosomal RNA small subunit methyltransferase H"/>
    <property type="match status" value="1"/>
</dbReference>
<dbReference type="Gene3D" id="1.10.150.170">
    <property type="entry name" value="Putative methyltransferase TM0872, insert domain"/>
    <property type="match status" value="1"/>
</dbReference>
<dbReference type="Gene3D" id="3.40.50.150">
    <property type="entry name" value="Vaccinia Virus protein VP39"/>
    <property type="match status" value="1"/>
</dbReference>
<dbReference type="HAMAP" id="MF_01007">
    <property type="entry name" value="16SrRNA_methyltr_H"/>
    <property type="match status" value="1"/>
</dbReference>
<dbReference type="InterPro" id="IPR002903">
    <property type="entry name" value="RsmH"/>
</dbReference>
<dbReference type="InterPro" id="IPR023397">
    <property type="entry name" value="SAM-dep_MeTrfase_MraW_recog"/>
</dbReference>
<dbReference type="InterPro" id="IPR029063">
    <property type="entry name" value="SAM-dependent_MTases_sf"/>
</dbReference>
<dbReference type="NCBIfam" id="TIGR00006">
    <property type="entry name" value="16S rRNA (cytosine(1402)-N(4))-methyltransferase RsmH"/>
    <property type="match status" value="1"/>
</dbReference>
<dbReference type="PANTHER" id="PTHR11265:SF0">
    <property type="entry name" value="12S RRNA N4-METHYLCYTIDINE METHYLTRANSFERASE"/>
    <property type="match status" value="1"/>
</dbReference>
<dbReference type="PANTHER" id="PTHR11265">
    <property type="entry name" value="S-ADENOSYL-METHYLTRANSFERASE MRAW"/>
    <property type="match status" value="1"/>
</dbReference>
<dbReference type="Pfam" id="PF01795">
    <property type="entry name" value="Methyltransf_5"/>
    <property type="match status" value="1"/>
</dbReference>
<dbReference type="SUPFAM" id="SSF81799">
    <property type="entry name" value="Putative methyltransferase TM0872, insert domain"/>
    <property type="match status" value="1"/>
</dbReference>
<dbReference type="SUPFAM" id="SSF53335">
    <property type="entry name" value="S-adenosyl-L-methionine-dependent methyltransferases"/>
    <property type="match status" value="1"/>
</dbReference>
<reference key="1">
    <citation type="submission" date="2007-04" db="EMBL/GenBank/DDBJ databases">
        <title>Complete sequence of chromosome of Mycobacterium gilvum PYR-GCK.</title>
        <authorList>
            <consortium name="US DOE Joint Genome Institute"/>
            <person name="Copeland A."/>
            <person name="Lucas S."/>
            <person name="Lapidus A."/>
            <person name="Barry K."/>
            <person name="Detter J.C."/>
            <person name="Glavina del Rio T."/>
            <person name="Hammon N."/>
            <person name="Israni S."/>
            <person name="Dalin E."/>
            <person name="Tice H."/>
            <person name="Pitluck S."/>
            <person name="Chain P."/>
            <person name="Malfatti S."/>
            <person name="Shin M."/>
            <person name="Vergez L."/>
            <person name="Schmutz J."/>
            <person name="Larimer F."/>
            <person name="Land M."/>
            <person name="Hauser L."/>
            <person name="Kyrpides N."/>
            <person name="Mikhailova N."/>
            <person name="Miller C."/>
            <person name="Richardson P."/>
        </authorList>
    </citation>
    <scope>NUCLEOTIDE SEQUENCE [LARGE SCALE GENOMIC DNA]</scope>
    <source>
        <strain>PYR-GCK</strain>
    </source>
</reference>